<name>SYC_SHEB5</name>
<keyword id="KW-0030">Aminoacyl-tRNA synthetase</keyword>
<keyword id="KW-0067">ATP-binding</keyword>
<keyword id="KW-0963">Cytoplasm</keyword>
<keyword id="KW-0436">Ligase</keyword>
<keyword id="KW-0479">Metal-binding</keyword>
<keyword id="KW-0547">Nucleotide-binding</keyword>
<keyword id="KW-0648">Protein biosynthesis</keyword>
<keyword id="KW-1185">Reference proteome</keyword>
<keyword id="KW-0862">Zinc</keyword>
<proteinExistence type="inferred from homology"/>
<protein>
    <recommendedName>
        <fullName evidence="1">Cysteine--tRNA ligase</fullName>
        <ecNumber evidence="1">6.1.1.16</ecNumber>
    </recommendedName>
    <alternativeName>
        <fullName evidence="1">Cysteinyl-tRNA synthetase</fullName>
        <shortName evidence="1">CysRS</shortName>
    </alternativeName>
</protein>
<gene>
    <name evidence="1" type="primary">cysS</name>
    <name type="ordered locus">Sbal_1601</name>
</gene>
<reference key="1">
    <citation type="submission" date="2007-02" db="EMBL/GenBank/DDBJ databases">
        <title>Complete sequence of chromosome of Shewanella baltica OS155.</title>
        <authorList>
            <consortium name="US DOE Joint Genome Institute"/>
            <person name="Copeland A."/>
            <person name="Lucas S."/>
            <person name="Lapidus A."/>
            <person name="Barry K."/>
            <person name="Detter J.C."/>
            <person name="Glavina del Rio T."/>
            <person name="Hammon N."/>
            <person name="Israni S."/>
            <person name="Dalin E."/>
            <person name="Tice H."/>
            <person name="Pitluck S."/>
            <person name="Sims D.R."/>
            <person name="Brettin T."/>
            <person name="Bruce D."/>
            <person name="Han C."/>
            <person name="Tapia R."/>
            <person name="Brainard J."/>
            <person name="Schmutz J."/>
            <person name="Larimer F."/>
            <person name="Land M."/>
            <person name="Hauser L."/>
            <person name="Kyrpides N."/>
            <person name="Mikhailova N."/>
            <person name="Brettar I."/>
            <person name="Klappenbach J."/>
            <person name="Konstantinidis K."/>
            <person name="Rodrigues J."/>
            <person name="Tiedje J."/>
            <person name="Richardson P."/>
        </authorList>
    </citation>
    <scope>NUCLEOTIDE SEQUENCE [LARGE SCALE GENOMIC DNA]</scope>
    <source>
        <strain>OS155 / ATCC BAA-1091</strain>
    </source>
</reference>
<accession>A3D302</accession>
<comment type="catalytic activity">
    <reaction evidence="1">
        <text>tRNA(Cys) + L-cysteine + ATP = L-cysteinyl-tRNA(Cys) + AMP + diphosphate</text>
        <dbReference type="Rhea" id="RHEA:17773"/>
        <dbReference type="Rhea" id="RHEA-COMP:9661"/>
        <dbReference type="Rhea" id="RHEA-COMP:9679"/>
        <dbReference type="ChEBI" id="CHEBI:30616"/>
        <dbReference type="ChEBI" id="CHEBI:33019"/>
        <dbReference type="ChEBI" id="CHEBI:35235"/>
        <dbReference type="ChEBI" id="CHEBI:78442"/>
        <dbReference type="ChEBI" id="CHEBI:78517"/>
        <dbReference type="ChEBI" id="CHEBI:456215"/>
        <dbReference type="EC" id="6.1.1.16"/>
    </reaction>
</comment>
<comment type="cofactor">
    <cofactor evidence="1">
        <name>Zn(2+)</name>
        <dbReference type="ChEBI" id="CHEBI:29105"/>
    </cofactor>
    <text evidence="1">Binds 1 zinc ion per subunit.</text>
</comment>
<comment type="subunit">
    <text evidence="1">Monomer.</text>
</comment>
<comment type="subcellular location">
    <subcellularLocation>
        <location evidence="1">Cytoplasm</location>
    </subcellularLocation>
</comment>
<comment type="similarity">
    <text evidence="1">Belongs to the class-I aminoacyl-tRNA synthetase family.</text>
</comment>
<sequence>MLKIYNSITRQKQEFKPITPGKIGMYVCGVTIYDLCHIGHGRTFVSFDMIVRYLRYAGYEVNFQRNITDVDDKIIKRANENNESCEALTERLIGEMHQDFDALNMLRPDFEPRATLHIAEIIDMVELLLARGHAYVASDGDVLFSVASYPDYGRLSGQNLDQLQAGARVEVDETKQNPMDFVLWKMSKPGEPTWESPWGPGRPGWHIECSAMNSKHLGLHFDIHGGGSDLQFPHHENEIAQSCCAHDTPYVNYWMHTGMVMVDREKMSKSLGNFFTIRDVLGHYDAETVRYFLLSGHYRSQLNYSEDNLKQARSALERLYTAIKDVDLTVAAAPAEEFVAKFKAAMDDDFNTPEAYSVLFDMVREINRLKLTDMAQASALAVTLKQLADVLGLLSQEPEAFFQGGGSYDEVAEIEALIVERNRARTEKDWAAADVARNCLNELGVELEDGPSGTTWRKK</sequence>
<evidence type="ECO:0000255" key="1">
    <source>
        <dbReference type="HAMAP-Rule" id="MF_00041"/>
    </source>
</evidence>
<dbReference type="EC" id="6.1.1.16" evidence="1"/>
<dbReference type="EMBL" id="CP000563">
    <property type="protein sequence ID" value="ABN61115.1"/>
    <property type="molecule type" value="Genomic_DNA"/>
</dbReference>
<dbReference type="RefSeq" id="WP_011846462.1">
    <property type="nucleotide sequence ID" value="NC_009052.1"/>
</dbReference>
<dbReference type="SMR" id="A3D302"/>
<dbReference type="STRING" id="325240.Sbal_1601"/>
<dbReference type="KEGG" id="sbl:Sbal_1601"/>
<dbReference type="HOGENOM" id="CLU_013528_0_1_6"/>
<dbReference type="OrthoDB" id="9815130at2"/>
<dbReference type="Proteomes" id="UP000001557">
    <property type="component" value="Chromosome"/>
</dbReference>
<dbReference type="GO" id="GO:0005829">
    <property type="term" value="C:cytosol"/>
    <property type="evidence" value="ECO:0007669"/>
    <property type="project" value="TreeGrafter"/>
</dbReference>
<dbReference type="GO" id="GO:0005524">
    <property type="term" value="F:ATP binding"/>
    <property type="evidence" value="ECO:0007669"/>
    <property type="project" value="UniProtKB-UniRule"/>
</dbReference>
<dbReference type="GO" id="GO:0004817">
    <property type="term" value="F:cysteine-tRNA ligase activity"/>
    <property type="evidence" value="ECO:0007669"/>
    <property type="project" value="UniProtKB-UniRule"/>
</dbReference>
<dbReference type="GO" id="GO:0008270">
    <property type="term" value="F:zinc ion binding"/>
    <property type="evidence" value="ECO:0007669"/>
    <property type="project" value="UniProtKB-UniRule"/>
</dbReference>
<dbReference type="GO" id="GO:0006423">
    <property type="term" value="P:cysteinyl-tRNA aminoacylation"/>
    <property type="evidence" value="ECO:0007669"/>
    <property type="project" value="UniProtKB-UniRule"/>
</dbReference>
<dbReference type="CDD" id="cd07963">
    <property type="entry name" value="Anticodon_Ia_Cys"/>
    <property type="match status" value="1"/>
</dbReference>
<dbReference type="CDD" id="cd00672">
    <property type="entry name" value="CysRS_core"/>
    <property type="match status" value="1"/>
</dbReference>
<dbReference type="FunFam" id="1.20.120.1910:FF:000001">
    <property type="entry name" value="Cysteine--tRNA ligase"/>
    <property type="match status" value="1"/>
</dbReference>
<dbReference type="FunFam" id="3.40.50.620:FF:000009">
    <property type="entry name" value="Cysteine--tRNA ligase"/>
    <property type="match status" value="1"/>
</dbReference>
<dbReference type="Gene3D" id="1.20.120.1910">
    <property type="entry name" value="Cysteine-tRNA ligase, C-terminal anti-codon recognition domain"/>
    <property type="match status" value="1"/>
</dbReference>
<dbReference type="Gene3D" id="3.40.50.620">
    <property type="entry name" value="HUPs"/>
    <property type="match status" value="1"/>
</dbReference>
<dbReference type="HAMAP" id="MF_00041">
    <property type="entry name" value="Cys_tRNA_synth"/>
    <property type="match status" value="1"/>
</dbReference>
<dbReference type="InterPro" id="IPR015803">
    <property type="entry name" value="Cys-tRNA-ligase"/>
</dbReference>
<dbReference type="InterPro" id="IPR015273">
    <property type="entry name" value="Cys-tRNA-synt_Ia_DALR"/>
</dbReference>
<dbReference type="InterPro" id="IPR024909">
    <property type="entry name" value="Cys-tRNA/MSH_ligase"/>
</dbReference>
<dbReference type="InterPro" id="IPR056411">
    <property type="entry name" value="CysS_C"/>
</dbReference>
<dbReference type="InterPro" id="IPR014729">
    <property type="entry name" value="Rossmann-like_a/b/a_fold"/>
</dbReference>
<dbReference type="InterPro" id="IPR032678">
    <property type="entry name" value="tRNA-synt_1_cat_dom"/>
</dbReference>
<dbReference type="InterPro" id="IPR009080">
    <property type="entry name" value="tRNAsynth_Ia_anticodon-bd"/>
</dbReference>
<dbReference type="NCBIfam" id="TIGR00435">
    <property type="entry name" value="cysS"/>
    <property type="match status" value="1"/>
</dbReference>
<dbReference type="PANTHER" id="PTHR10890:SF3">
    <property type="entry name" value="CYSTEINE--TRNA LIGASE, CYTOPLASMIC"/>
    <property type="match status" value="1"/>
</dbReference>
<dbReference type="PANTHER" id="PTHR10890">
    <property type="entry name" value="CYSTEINYL-TRNA SYNTHETASE"/>
    <property type="match status" value="1"/>
</dbReference>
<dbReference type="Pfam" id="PF23493">
    <property type="entry name" value="CysS_C"/>
    <property type="match status" value="1"/>
</dbReference>
<dbReference type="Pfam" id="PF09190">
    <property type="entry name" value="DALR_2"/>
    <property type="match status" value="1"/>
</dbReference>
<dbReference type="Pfam" id="PF01406">
    <property type="entry name" value="tRNA-synt_1e"/>
    <property type="match status" value="1"/>
</dbReference>
<dbReference type="PRINTS" id="PR00983">
    <property type="entry name" value="TRNASYNTHCYS"/>
</dbReference>
<dbReference type="SMART" id="SM00840">
    <property type="entry name" value="DALR_2"/>
    <property type="match status" value="1"/>
</dbReference>
<dbReference type="SUPFAM" id="SSF47323">
    <property type="entry name" value="Anticodon-binding domain of a subclass of class I aminoacyl-tRNA synthetases"/>
    <property type="match status" value="1"/>
</dbReference>
<dbReference type="SUPFAM" id="SSF52374">
    <property type="entry name" value="Nucleotidylyl transferase"/>
    <property type="match status" value="1"/>
</dbReference>
<organism>
    <name type="scientific">Shewanella baltica (strain OS155 / ATCC BAA-1091)</name>
    <dbReference type="NCBI Taxonomy" id="325240"/>
    <lineage>
        <taxon>Bacteria</taxon>
        <taxon>Pseudomonadati</taxon>
        <taxon>Pseudomonadota</taxon>
        <taxon>Gammaproteobacteria</taxon>
        <taxon>Alteromonadales</taxon>
        <taxon>Shewanellaceae</taxon>
        <taxon>Shewanella</taxon>
    </lineage>
</organism>
<feature type="chain" id="PRO_0000332898" description="Cysteine--tRNA ligase">
    <location>
        <begin position="1"/>
        <end position="459"/>
    </location>
</feature>
<feature type="short sequence motif" description="'HIGH' region">
    <location>
        <begin position="30"/>
        <end position="40"/>
    </location>
</feature>
<feature type="short sequence motif" description="'KMSKS' region">
    <location>
        <begin position="266"/>
        <end position="270"/>
    </location>
</feature>
<feature type="binding site" evidence="1">
    <location>
        <position position="28"/>
    </location>
    <ligand>
        <name>Zn(2+)</name>
        <dbReference type="ChEBI" id="CHEBI:29105"/>
    </ligand>
</feature>
<feature type="binding site" evidence="1">
    <location>
        <position position="209"/>
    </location>
    <ligand>
        <name>Zn(2+)</name>
        <dbReference type="ChEBI" id="CHEBI:29105"/>
    </ligand>
</feature>
<feature type="binding site" evidence="1">
    <location>
        <position position="234"/>
    </location>
    <ligand>
        <name>Zn(2+)</name>
        <dbReference type="ChEBI" id="CHEBI:29105"/>
    </ligand>
</feature>
<feature type="binding site" evidence="1">
    <location>
        <position position="238"/>
    </location>
    <ligand>
        <name>Zn(2+)</name>
        <dbReference type="ChEBI" id="CHEBI:29105"/>
    </ligand>
</feature>
<feature type="binding site" evidence="1">
    <location>
        <position position="269"/>
    </location>
    <ligand>
        <name>ATP</name>
        <dbReference type="ChEBI" id="CHEBI:30616"/>
    </ligand>
</feature>